<evidence type="ECO:0000255" key="1">
    <source>
        <dbReference type="HAMAP-Rule" id="MF_00040"/>
    </source>
</evidence>
<comment type="function">
    <text evidence="1">Responsible for the release of ribosomes from messenger RNA at the termination of protein biosynthesis. May increase the efficiency of translation by recycling ribosomes from one round of translation to another.</text>
</comment>
<comment type="subcellular location">
    <subcellularLocation>
        <location evidence="1">Cytoplasm</location>
    </subcellularLocation>
</comment>
<comment type="similarity">
    <text evidence="1">Belongs to the RRF family.</text>
</comment>
<organism>
    <name type="scientific">Burkholderia mallei (strain ATCC 23344)</name>
    <dbReference type="NCBI Taxonomy" id="243160"/>
    <lineage>
        <taxon>Bacteria</taxon>
        <taxon>Pseudomonadati</taxon>
        <taxon>Pseudomonadota</taxon>
        <taxon>Betaproteobacteria</taxon>
        <taxon>Burkholderiales</taxon>
        <taxon>Burkholderiaceae</taxon>
        <taxon>Burkholderia</taxon>
        <taxon>pseudomallei group</taxon>
    </lineage>
</organism>
<proteinExistence type="inferred from homology"/>
<dbReference type="EMBL" id="CP000010">
    <property type="protein sequence ID" value="AAU47752.1"/>
    <property type="molecule type" value="Genomic_DNA"/>
</dbReference>
<dbReference type="RefSeq" id="WP_004192143.1">
    <property type="nucleotide sequence ID" value="NC_006348.1"/>
</dbReference>
<dbReference type="RefSeq" id="YP_103192.1">
    <property type="nucleotide sequence ID" value="NC_006348.1"/>
</dbReference>
<dbReference type="SMR" id="Q62JC7"/>
<dbReference type="GeneID" id="93060697"/>
<dbReference type="KEGG" id="bma:BMA1552"/>
<dbReference type="PATRIC" id="fig|243160.12.peg.1597"/>
<dbReference type="eggNOG" id="COG0233">
    <property type="taxonomic scope" value="Bacteria"/>
</dbReference>
<dbReference type="HOGENOM" id="CLU_073981_2_1_4"/>
<dbReference type="Proteomes" id="UP000006693">
    <property type="component" value="Chromosome 1"/>
</dbReference>
<dbReference type="GO" id="GO:0005829">
    <property type="term" value="C:cytosol"/>
    <property type="evidence" value="ECO:0007669"/>
    <property type="project" value="GOC"/>
</dbReference>
<dbReference type="GO" id="GO:0043023">
    <property type="term" value="F:ribosomal large subunit binding"/>
    <property type="evidence" value="ECO:0007669"/>
    <property type="project" value="TreeGrafter"/>
</dbReference>
<dbReference type="GO" id="GO:0002184">
    <property type="term" value="P:cytoplasmic translational termination"/>
    <property type="evidence" value="ECO:0007669"/>
    <property type="project" value="TreeGrafter"/>
</dbReference>
<dbReference type="CDD" id="cd00520">
    <property type="entry name" value="RRF"/>
    <property type="match status" value="1"/>
</dbReference>
<dbReference type="FunFam" id="1.10.132.20:FF:000001">
    <property type="entry name" value="Ribosome-recycling factor"/>
    <property type="match status" value="1"/>
</dbReference>
<dbReference type="FunFam" id="3.30.1360.40:FF:000001">
    <property type="entry name" value="Ribosome-recycling factor"/>
    <property type="match status" value="1"/>
</dbReference>
<dbReference type="Gene3D" id="3.30.1360.40">
    <property type="match status" value="1"/>
</dbReference>
<dbReference type="Gene3D" id="1.10.132.20">
    <property type="entry name" value="Ribosome-recycling factor"/>
    <property type="match status" value="1"/>
</dbReference>
<dbReference type="HAMAP" id="MF_00040">
    <property type="entry name" value="RRF"/>
    <property type="match status" value="1"/>
</dbReference>
<dbReference type="InterPro" id="IPR002661">
    <property type="entry name" value="Ribosome_recyc_fac"/>
</dbReference>
<dbReference type="InterPro" id="IPR023584">
    <property type="entry name" value="Ribosome_recyc_fac_dom"/>
</dbReference>
<dbReference type="InterPro" id="IPR036191">
    <property type="entry name" value="RRF_sf"/>
</dbReference>
<dbReference type="NCBIfam" id="TIGR00496">
    <property type="entry name" value="frr"/>
    <property type="match status" value="1"/>
</dbReference>
<dbReference type="PANTHER" id="PTHR20982:SF3">
    <property type="entry name" value="MITOCHONDRIAL RIBOSOME RECYCLING FACTOR PSEUDO 1"/>
    <property type="match status" value="1"/>
</dbReference>
<dbReference type="PANTHER" id="PTHR20982">
    <property type="entry name" value="RIBOSOME RECYCLING FACTOR"/>
    <property type="match status" value="1"/>
</dbReference>
<dbReference type="Pfam" id="PF01765">
    <property type="entry name" value="RRF"/>
    <property type="match status" value="1"/>
</dbReference>
<dbReference type="SUPFAM" id="SSF55194">
    <property type="entry name" value="Ribosome recycling factor, RRF"/>
    <property type="match status" value="1"/>
</dbReference>
<reference key="1">
    <citation type="journal article" date="2004" name="Proc. Natl. Acad. Sci. U.S.A.">
        <title>Structural flexibility in the Burkholderia mallei genome.</title>
        <authorList>
            <person name="Nierman W.C."/>
            <person name="DeShazer D."/>
            <person name="Kim H.S."/>
            <person name="Tettelin H."/>
            <person name="Nelson K.E."/>
            <person name="Feldblyum T.V."/>
            <person name="Ulrich R.L."/>
            <person name="Ronning C.M."/>
            <person name="Brinkac L.M."/>
            <person name="Daugherty S.C."/>
            <person name="Davidsen T.D."/>
            <person name="DeBoy R.T."/>
            <person name="Dimitrov G."/>
            <person name="Dodson R.J."/>
            <person name="Durkin A.S."/>
            <person name="Gwinn M.L."/>
            <person name="Haft D.H."/>
            <person name="Khouri H.M."/>
            <person name="Kolonay J.F."/>
            <person name="Madupu R."/>
            <person name="Mohammoud Y."/>
            <person name="Nelson W.C."/>
            <person name="Radune D."/>
            <person name="Romero C.M."/>
            <person name="Sarria S."/>
            <person name="Selengut J."/>
            <person name="Shamblin C."/>
            <person name="Sullivan S.A."/>
            <person name="White O."/>
            <person name="Yu Y."/>
            <person name="Zafar N."/>
            <person name="Zhou L."/>
            <person name="Fraser C.M."/>
        </authorList>
    </citation>
    <scope>NUCLEOTIDE SEQUENCE [LARGE SCALE GENOMIC DNA]</scope>
    <source>
        <strain>ATCC 23344</strain>
    </source>
</reference>
<protein>
    <recommendedName>
        <fullName evidence="1">Ribosome-recycling factor</fullName>
        <shortName evidence="1">RRF</shortName>
    </recommendedName>
    <alternativeName>
        <fullName evidence="1">Ribosome-releasing factor</fullName>
    </alternativeName>
</protein>
<gene>
    <name evidence="1" type="primary">frr</name>
    <name type="ordered locus">BMA1552</name>
</gene>
<feature type="chain" id="PRO_0000167431" description="Ribosome-recycling factor">
    <location>
        <begin position="1"/>
        <end position="186"/>
    </location>
</feature>
<name>RRF_BURMA</name>
<accession>Q62JC7</accession>
<keyword id="KW-0963">Cytoplasm</keyword>
<keyword id="KW-0648">Protein biosynthesis</keyword>
<keyword id="KW-1185">Reference proteome</keyword>
<sequence length="186" mass="20899">MSVADIKKSVEQKMQRSIEAFKNDLAKIRTGRAHTGLLDHVQVDYYGSMVPISQVANLTLVDARTIGVQPWEKTMVAKVEKAIREADLGLNPATSGDLIRVPMPPLTEERRRELTKVVKSEGETAKVAVRNLRRDANEQLKKLVKDKEISEDDERRASDDVQKLTDKHVAEIDKLVQAKDAEIMTV</sequence>